<gene>
    <name type="primary">CALCA</name>
    <name type="synonym">CALC</name>
</gene>
<name>CALC_BOVIN</name>
<protein>
    <recommendedName>
        <fullName>Calcitonin</fullName>
    </recommendedName>
</protein>
<feature type="peptide" id="PRO_0000044665" description="Calcitonin">
    <location>
        <begin position="1"/>
        <end position="32"/>
    </location>
</feature>
<feature type="modified residue" description="Proline amide" evidence="2">
    <location>
        <position position="32"/>
    </location>
</feature>
<feature type="disulfide bond" evidence="2">
    <location>
        <begin position="1"/>
        <end position="7"/>
    </location>
</feature>
<comment type="function">
    <text evidence="1">Calcitonin is a peptide hormone that causes a rapid but short-lived drop in the level of calcium and phosphate in blood by promoting the incorporation of those ions in the bones. Calcitonin function is mediated by the calcitonin receptor/CALCR and the CALCR-RAMP2 (AMYR2) receptor complex (By similarity).</text>
</comment>
<comment type="subcellular location">
    <subcellularLocation>
        <location>Secreted</location>
    </subcellularLocation>
</comment>
<comment type="similarity">
    <text evidence="3">Belongs to the calcitonin family.</text>
</comment>
<sequence length="32" mass="3596">CSNLSTCVLSAYWKDLNNYHRFSGMGFGPETP</sequence>
<reference key="1">
    <citation type="journal article" date="1969" name="Proc. Natl. Acad. Sci. U.S.A.">
        <title>Amino acid sequence of bovine thyrocalcitonin.</title>
        <authorList>
            <person name="Brewer H.B. Jr."/>
            <person name="Ronan R."/>
        </authorList>
    </citation>
    <scope>PROTEIN SEQUENCE</scope>
    <scope>AMIDATION AT PRO-32</scope>
</reference>
<proteinExistence type="evidence at protein level"/>
<organism>
    <name type="scientific">Bos taurus</name>
    <name type="common">Bovine</name>
    <dbReference type="NCBI Taxonomy" id="9913"/>
    <lineage>
        <taxon>Eukaryota</taxon>
        <taxon>Metazoa</taxon>
        <taxon>Chordata</taxon>
        <taxon>Craniata</taxon>
        <taxon>Vertebrata</taxon>
        <taxon>Euteleostomi</taxon>
        <taxon>Mammalia</taxon>
        <taxon>Eutheria</taxon>
        <taxon>Laurasiatheria</taxon>
        <taxon>Artiodactyla</taxon>
        <taxon>Ruminantia</taxon>
        <taxon>Pecora</taxon>
        <taxon>Bovidae</taxon>
        <taxon>Bovinae</taxon>
        <taxon>Bos</taxon>
    </lineage>
</organism>
<evidence type="ECO:0000250" key="1">
    <source>
        <dbReference type="UniProtKB" id="P01258"/>
    </source>
</evidence>
<evidence type="ECO:0000269" key="2">
    <source>
    </source>
</evidence>
<evidence type="ECO:0000305" key="3"/>
<dbReference type="PIR" id="A38048">
    <property type="entry name" value="TCBO"/>
</dbReference>
<dbReference type="SMR" id="P01260"/>
<dbReference type="STRING" id="9913.ENSBTAP00000053947"/>
<dbReference type="MetOSite" id="P01260"/>
<dbReference type="PaxDb" id="9913-ENSBTAP00000053947"/>
<dbReference type="eggNOG" id="ENOG502RZI5">
    <property type="taxonomic scope" value="Eukaryota"/>
</dbReference>
<dbReference type="HOGENOM" id="CLU_122444_0_0_1"/>
<dbReference type="InParanoid" id="P01260"/>
<dbReference type="OrthoDB" id="9929923at2759"/>
<dbReference type="Proteomes" id="UP000009136">
    <property type="component" value="Unplaced"/>
</dbReference>
<dbReference type="GO" id="GO:0005576">
    <property type="term" value="C:extracellular region"/>
    <property type="evidence" value="ECO:0007669"/>
    <property type="project" value="UniProtKB-SubCell"/>
</dbReference>
<dbReference type="GO" id="GO:0005179">
    <property type="term" value="F:hormone activity"/>
    <property type="evidence" value="ECO:0007669"/>
    <property type="project" value="UniProtKB-KW"/>
</dbReference>
<dbReference type="InterPro" id="IPR021118">
    <property type="entry name" value="Calcitonin"/>
</dbReference>
<dbReference type="InterPro" id="IPR018360">
    <property type="entry name" value="Calcitonin_CS"/>
</dbReference>
<dbReference type="InterPro" id="IPR001693">
    <property type="entry name" value="Calcitonin_peptide-like"/>
</dbReference>
<dbReference type="PRINTS" id="PR00270">
    <property type="entry name" value="CALCITONINA"/>
</dbReference>
<dbReference type="SMART" id="SM00113">
    <property type="entry name" value="CALCITONIN"/>
    <property type="match status" value="1"/>
</dbReference>
<dbReference type="PROSITE" id="PS00258">
    <property type="entry name" value="CALCITONIN"/>
    <property type="match status" value="1"/>
</dbReference>
<keyword id="KW-0027">Amidation</keyword>
<keyword id="KW-0903">Direct protein sequencing</keyword>
<keyword id="KW-1015">Disulfide bond</keyword>
<keyword id="KW-0372">Hormone</keyword>
<keyword id="KW-1185">Reference proteome</keyword>
<keyword id="KW-0964">Secreted</keyword>
<accession>P01260</accession>